<dbReference type="EC" id="2.8.1.6" evidence="1"/>
<dbReference type="EMBL" id="CP001138">
    <property type="protein sequence ID" value="ACH51325.1"/>
    <property type="molecule type" value="Genomic_DNA"/>
</dbReference>
<dbReference type="RefSeq" id="WP_000090724.1">
    <property type="nucleotide sequence ID" value="NC_011149.1"/>
</dbReference>
<dbReference type="SMR" id="B5F072"/>
<dbReference type="KEGG" id="sea:SeAg_B0830"/>
<dbReference type="HOGENOM" id="CLU_033172_1_2_6"/>
<dbReference type="UniPathway" id="UPA00078">
    <property type="reaction ID" value="UER00162"/>
</dbReference>
<dbReference type="Proteomes" id="UP000008819">
    <property type="component" value="Chromosome"/>
</dbReference>
<dbReference type="GO" id="GO:0051537">
    <property type="term" value="F:2 iron, 2 sulfur cluster binding"/>
    <property type="evidence" value="ECO:0007669"/>
    <property type="project" value="UniProtKB-KW"/>
</dbReference>
<dbReference type="GO" id="GO:0051539">
    <property type="term" value="F:4 iron, 4 sulfur cluster binding"/>
    <property type="evidence" value="ECO:0007669"/>
    <property type="project" value="UniProtKB-KW"/>
</dbReference>
<dbReference type="GO" id="GO:0004076">
    <property type="term" value="F:biotin synthase activity"/>
    <property type="evidence" value="ECO:0007669"/>
    <property type="project" value="UniProtKB-UniRule"/>
</dbReference>
<dbReference type="GO" id="GO:0005506">
    <property type="term" value="F:iron ion binding"/>
    <property type="evidence" value="ECO:0007669"/>
    <property type="project" value="UniProtKB-UniRule"/>
</dbReference>
<dbReference type="GO" id="GO:0009102">
    <property type="term" value="P:biotin biosynthetic process"/>
    <property type="evidence" value="ECO:0007669"/>
    <property type="project" value="UniProtKB-UniRule"/>
</dbReference>
<dbReference type="CDD" id="cd01335">
    <property type="entry name" value="Radical_SAM"/>
    <property type="match status" value="1"/>
</dbReference>
<dbReference type="FunFam" id="3.20.20.70:FF:000011">
    <property type="entry name" value="Biotin synthase"/>
    <property type="match status" value="1"/>
</dbReference>
<dbReference type="Gene3D" id="3.20.20.70">
    <property type="entry name" value="Aldolase class I"/>
    <property type="match status" value="1"/>
</dbReference>
<dbReference type="HAMAP" id="MF_01694">
    <property type="entry name" value="BioB"/>
    <property type="match status" value="1"/>
</dbReference>
<dbReference type="InterPro" id="IPR013785">
    <property type="entry name" value="Aldolase_TIM"/>
</dbReference>
<dbReference type="InterPro" id="IPR010722">
    <property type="entry name" value="BATS_dom"/>
</dbReference>
<dbReference type="InterPro" id="IPR002684">
    <property type="entry name" value="Biotin_synth/BioAB"/>
</dbReference>
<dbReference type="InterPro" id="IPR024177">
    <property type="entry name" value="Biotin_synthase"/>
</dbReference>
<dbReference type="InterPro" id="IPR006638">
    <property type="entry name" value="Elp3/MiaA/NifB-like_rSAM"/>
</dbReference>
<dbReference type="InterPro" id="IPR007197">
    <property type="entry name" value="rSAM"/>
</dbReference>
<dbReference type="NCBIfam" id="TIGR00433">
    <property type="entry name" value="bioB"/>
    <property type="match status" value="1"/>
</dbReference>
<dbReference type="PANTHER" id="PTHR22976">
    <property type="entry name" value="BIOTIN SYNTHASE"/>
    <property type="match status" value="1"/>
</dbReference>
<dbReference type="PANTHER" id="PTHR22976:SF2">
    <property type="entry name" value="BIOTIN SYNTHASE, MITOCHONDRIAL"/>
    <property type="match status" value="1"/>
</dbReference>
<dbReference type="Pfam" id="PF06968">
    <property type="entry name" value="BATS"/>
    <property type="match status" value="1"/>
</dbReference>
<dbReference type="Pfam" id="PF04055">
    <property type="entry name" value="Radical_SAM"/>
    <property type="match status" value="1"/>
</dbReference>
<dbReference type="PIRSF" id="PIRSF001619">
    <property type="entry name" value="Biotin_synth"/>
    <property type="match status" value="1"/>
</dbReference>
<dbReference type="SFLD" id="SFLDF00272">
    <property type="entry name" value="biotin_synthase"/>
    <property type="match status" value="1"/>
</dbReference>
<dbReference type="SFLD" id="SFLDS00029">
    <property type="entry name" value="Radical_SAM"/>
    <property type="match status" value="1"/>
</dbReference>
<dbReference type="SMART" id="SM00876">
    <property type="entry name" value="BATS"/>
    <property type="match status" value="1"/>
</dbReference>
<dbReference type="SMART" id="SM00729">
    <property type="entry name" value="Elp3"/>
    <property type="match status" value="1"/>
</dbReference>
<dbReference type="SUPFAM" id="SSF102114">
    <property type="entry name" value="Radical SAM enzymes"/>
    <property type="match status" value="1"/>
</dbReference>
<dbReference type="PROSITE" id="PS51918">
    <property type="entry name" value="RADICAL_SAM"/>
    <property type="match status" value="1"/>
</dbReference>
<sequence length="346" mass="38776">MARHPRWTLSQVTELFEKPLLELLFEAQQIHRQHFDPQQVQVSTLLSIKTGACPEDCKYCPQSSRYKTGLEAERLMEVEQVLDSARKAKNAGSTRFCMGAAWKNPHERDMPYLEKIVQGVKAMGLETCMTLGMLNESQAQRLANAGLDYYNHNLDTSPEFYGNIITTRTYQERLDTLEKVREAGIKVCSGGIVGLGETVTDRAGLLLQLANLPTPPESVPINMLVKVKGTPLADNDDVDAFDFIRTIAVARIMMPTSYVRLSAGREQMNEQTQAMCFMAGANSIFYGCKLLTTPNPAEDKDLQLFRKLGLNPQQTRVLAGDNEQQQRLEQTLMTPDTDDYYNAAAL</sequence>
<feature type="chain" id="PRO_0000381594" description="Biotin synthase">
    <location>
        <begin position="1"/>
        <end position="346"/>
    </location>
</feature>
<feature type="domain" description="Radical SAM core" evidence="2">
    <location>
        <begin position="38"/>
        <end position="256"/>
    </location>
</feature>
<feature type="binding site" evidence="1">
    <location>
        <position position="53"/>
    </location>
    <ligand>
        <name>[4Fe-4S] cluster</name>
        <dbReference type="ChEBI" id="CHEBI:49883"/>
        <note>4Fe-4S-S-AdoMet</note>
    </ligand>
</feature>
<feature type="binding site" evidence="1">
    <location>
        <position position="57"/>
    </location>
    <ligand>
        <name>[4Fe-4S] cluster</name>
        <dbReference type="ChEBI" id="CHEBI:49883"/>
        <note>4Fe-4S-S-AdoMet</note>
    </ligand>
</feature>
<feature type="binding site" evidence="1">
    <location>
        <position position="60"/>
    </location>
    <ligand>
        <name>[4Fe-4S] cluster</name>
        <dbReference type="ChEBI" id="CHEBI:49883"/>
        <note>4Fe-4S-S-AdoMet</note>
    </ligand>
</feature>
<feature type="binding site" evidence="1">
    <location>
        <position position="97"/>
    </location>
    <ligand>
        <name>[2Fe-2S] cluster</name>
        <dbReference type="ChEBI" id="CHEBI:190135"/>
    </ligand>
</feature>
<feature type="binding site" evidence="1">
    <location>
        <position position="128"/>
    </location>
    <ligand>
        <name>[2Fe-2S] cluster</name>
        <dbReference type="ChEBI" id="CHEBI:190135"/>
    </ligand>
</feature>
<feature type="binding site" evidence="1">
    <location>
        <position position="188"/>
    </location>
    <ligand>
        <name>[2Fe-2S] cluster</name>
        <dbReference type="ChEBI" id="CHEBI:190135"/>
    </ligand>
</feature>
<feature type="binding site" evidence="1">
    <location>
        <position position="260"/>
    </location>
    <ligand>
        <name>[2Fe-2S] cluster</name>
        <dbReference type="ChEBI" id="CHEBI:190135"/>
    </ligand>
</feature>
<proteinExistence type="inferred from homology"/>
<accession>B5F072</accession>
<comment type="function">
    <text evidence="1">Catalyzes the conversion of dethiobiotin (DTB) to biotin by the insertion of a sulfur atom into dethiobiotin via a radical-based mechanism.</text>
</comment>
<comment type="catalytic activity">
    <reaction evidence="1">
        <text>(4R,5S)-dethiobiotin + (sulfur carrier)-SH + 2 reduced [2Fe-2S]-[ferredoxin] + 2 S-adenosyl-L-methionine = (sulfur carrier)-H + biotin + 2 5'-deoxyadenosine + 2 L-methionine + 2 oxidized [2Fe-2S]-[ferredoxin]</text>
        <dbReference type="Rhea" id="RHEA:22060"/>
        <dbReference type="Rhea" id="RHEA-COMP:10000"/>
        <dbReference type="Rhea" id="RHEA-COMP:10001"/>
        <dbReference type="Rhea" id="RHEA-COMP:14737"/>
        <dbReference type="Rhea" id="RHEA-COMP:14739"/>
        <dbReference type="ChEBI" id="CHEBI:17319"/>
        <dbReference type="ChEBI" id="CHEBI:29917"/>
        <dbReference type="ChEBI" id="CHEBI:33737"/>
        <dbReference type="ChEBI" id="CHEBI:33738"/>
        <dbReference type="ChEBI" id="CHEBI:57586"/>
        <dbReference type="ChEBI" id="CHEBI:57844"/>
        <dbReference type="ChEBI" id="CHEBI:59789"/>
        <dbReference type="ChEBI" id="CHEBI:64428"/>
        <dbReference type="ChEBI" id="CHEBI:149473"/>
        <dbReference type="EC" id="2.8.1.6"/>
    </reaction>
</comment>
<comment type="cofactor">
    <cofactor evidence="1">
        <name>[4Fe-4S] cluster</name>
        <dbReference type="ChEBI" id="CHEBI:49883"/>
    </cofactor>
    <text evidence="1">Binds 1 [4Fe-4S] cluster. The cluster is coordinated with 3 cysteines and an exchangeable S-adenosyl-L-methionine.</text>
</comment>
<comment type="cofactor">
    <cofactor evidence="1">
        <name>[2Fe-2S] cluster</name>
        <dbReference type="ChEBI" id="CHEBI:190135"/>
    </cofactor>
    <text evidence="1">Binds 1 [2Fe-2S] cluster. The cluster is coordinated with 3 cysteines and 1 arginine.</text>
</comment>
<comment type="pathway">
    <text evidence="1">Cofactor biosynthesis; biotin biosynthesis; biotin from 7,8-diaminononanoate: step 2/2.</text>
</comment>
<comment type="subunit">
    <text evidence="1">Homodimer.</text>
</comment>
<comment type="similarity">
    <text evidence="1">Belongs to the radical SAM superfamily. Biotin synthase family.</text>
</comment>
<keyword id="KW-0001">2Fe-2S</keyword>
<keyword id="KW-0004">4Fe-4S</keyword>
<keyword id="KW-0093">Biotin biosynthesis</keyword>
<keyword id="KW-0408">Iron</keyword>
<keyword id="KW-0411">Iron-sulfur</keyword>
<keyword id="KW-0479">Metal-binding</keyword>
<keyword id="KW-0949">S-adenosyl-L-methionine</keyword>
<keyword id="KW-0808">Transferase</keyword>
<gene>
    <name evidence="1" type="primary">bioB</name>
    <name type="ordered locus">SeAg_B0830</name>
</gene>
<protein>
    <recommendedName>
        <fullName evidence="1">Biotin synthase</fullName>
        <ecNumber evidence="1">2.8.1.6</ecNumber>
    </recommendedName>
</protein>
<evidence type="ECO:0000255" key="1">
    <source>
        <dbReference type="HAMAP-Rule" id="MF_01694"/>
    </source>
</evidence>
<evidence type="ECO:0000255" key="2">
    <source>
        <dbReference type="PROSITE-ProRule" id="PRU01266"/>
    </source>
</evidence>
<name>BIOB_SALA4</name>
<organism>
    <name type="scientific">Salmonella agona (strain SL483)</name>
    <dbReference type="NCBI Taxonomy" id="454166"/>
    <lineage>
        <taxon>Bacteria</taxon>
        <taxon>Pseudomonadati</taxon>
        <taxon>Pseudomonadota</taxon>
        <taxon>Gammaproteobacteria</taxon>
        <taxon>Enterobacterales</taxon>
        <taxon>Enterobacteriaceae</taxon>
        <taxon>Salmonella</taxon>
    </lineage>
</organism>
<reference key="1">
    <citation type="journal article" date="2011" name="J. Bacteriol.">
        <title>Comparative genomics of 28 Salmonella enterica isolates: evidence for CRISPR-mediated adaptive sublineage evolution.</title>
        <authorList>
            <person name="Fricke W.F."/>
            <person name="Mammel M.K."/>
            <person name="McDermott P.F."/>
            <person name="Tartera C."/>
            <person name="White D.G."/>
            <person name="Leclerc J.E."/>
            <person name="Ravel J."/>
            <person name="Cebula T.A."/>
        </authorList>
    </citation>
    <scope>NUCLEOTIDE SEQUENCE [LARGE SCALE GENOMIC DNA]</scope>
    <source>
        <strain>SL483</strain>
    </source>
</reference>